<reference key="1">
    <citation type="journal article" date="1996" name="Microbiology">
        <title>Determination of a 12 kb nucleotide sequence around the 76 degrees region of the Bacillus subtilis chromosome.</title>
        <authorList>
            <person name="Yamamoto H."/>
            <person name="Uchiyama S."/>
            <person name="Fajar A.N."/>
            <person name="Ogasawara N."/>
            <person name="Sekiguchi J."/>
        </authorList>
    </citation>
    <scope>NUCLEOTIDE SEQUENCE [GENOMIC DNA]</scope>
    <source>
        <strain>168</strain>
    </source>
</reference>
<reference key="2">
    <citation type="journal article" date="1997" name="Nature">
        <title>The complete genome sequence of the Gram-positive bacterium Bacillus subtilis.</title>
        <authorList>
            <person name="Kunst F."/>
            <person name="Ogasawara N."/>
            <person name="Moszer I."/>
            <person name="Albertini A.M."/>
            <person name="Alloni G."/>
            <person name="Azevedo V."/>
            <person name="Bertero M.G."/>
            <person name="Bessieres P."/>
            <person name="Bolotin A."/>
            <person name="Borchert S."/>
            <person name="Borriss R."/>
            <person name="Boursier L."/>
            <person name="Brans A."/>
            <person name="Braun M."/>
            <person name="Brignell S.C."/>
            <person name="Bron S."/>
            <person name="Brouillet S."/>
            <person name="Bruschi C.V."/>
            <person name="Caldwell B."/>
            <person name="Capuano V."/>
            <person name="Carter N.M."/>
            <person name="Choi S.-K."/>
            <person name="Codani J.-J."/>
            <person name="Connerton I.F."/>
            <person name="Cummings N.J."/>
            <person name="Daniel R.A."/>
            <person name="Denizot F."/>
            <person name="Devine K.M."/>
            <person name="Duesterhoeft A."/>
            <person name="Ehrlich S.D."/>
            <person name="Emmerson P.T."/>
            <person name="Entian K.-D."/>
            <person name="Errington J."/>
            <person name="Fabret C."/>
            <person name="Ferrari E."/>
            <person name="Foulger D."/>
            <person name="Fritz C."/>
            <person name="Fujita M."/>
            <person name="Fujita Y."/>
            <person name="Fuma S."/>
            <person name="Galizzi A."/>
            <person name="Galleron N."/>
            <person name="Ghim S.-Y."/>
            <person name="Glaser P."/>
            <person name="Goffeau A."/>
            <person name="Golightly E.J."/>
            <person name="Grandi G."/>
            <person name="Guiseppi G."/>
            <person name="Guy B.J."/>
            <person name="Haga K."/>
            <person name="Haiech J."/>
            <person name="Harwood C.R."/>
            <person name="Henaut A."/>
            <person name="Hilbert H."/>
            <person name="Holsappel S."/>
            <person name="Hosono S."/>
            <person name="Hullo M.-F."/>
            <person name="Itaya M."/>
            <person name="Jones L.-M."/>
            <person name="Joris B."/>
            <person name="Karamata D."/>
            <person name="Kasahara Y."/>
            <person name="Klaerr-Blanchard M."/>
            <person name="Klein C."/>
            <person name="Kobayashi Y."/>
            <person name="Koetter P."/>
            <person name="Koningstein G."/>
            <person name="Krogh S."/>
            <person name="Kumano M."/>
            <person name="Kurita K."/>
            <person name="Lapidus A."/>
            <person name="Lardinois S."/>
            <person name="Lauber J."/>
            <person name="Lazarevic V."/>
            <person name="Lee S.-M."/>
            <person name="Levine A."/>
            <person name="Liu H."/>
            <person name="Masuda S."/>
            <person name="Mauel C."/>
            <person name="Medigue C."/>
            <person name="Medina N."/>
            <person name="Mellado R.P."/>
            <person name="Mizuno M."/>
            <person name="Moestl D."/>
            <person name="Nakai S."/>
            <person name="Noback M."/>
            <person name="Noone D."/>
            <person name="O'Reilly M."/>
            <person name="Ogawa K."/>
            <person name="Ogiwara A."/>
            <person name="Oudega B."/>
            <person name="Park S.-H."/>
            <person name="Parro V."/>
            <person name="Pohl T.M."/>
            <person name="Portetelle D."/>
            <person name="Porwollik S."/>
            <person name="Prescott A.M."/>
            <person name="Presecan E."/>
            <person name="Pujic P."/>
            <person name="Purnelle B."/>
            <person name="Rapoport G."/>
            <person name="Rey M."/>
            <person name="Reynolds S."/>
            <person name="Rieger M."/>
            <person name="Rivolta C."/>
            <person name="Rocha E."/>
            <person name="Roche B."/>
            <person name="Rose M."/>
            <person name="Sadaie Y."/>
            <person name="Sato T."/>
            <person name="Scanlan E."/>
            <person name="Schleich S."/>
            <person name="Schroeter R."/>
            <person name="Scoffone F."/>
            <person name="Sekiguchi J."/>
            <person name="Sekowska A."/>
            <person name="Seror S.J."/>
            <person name="Serror P."/>
            <person name="Shin B.-S."/>
            <person name="Soldo B."/>
            <person name="Sorokin A."/>
            <person name="Tacconi E."/>
            <person name="Takagi T."/>
            <person name="Takahashi H."/>
            <person name="Takemaru K."/>
            <person name="Takeuchi M."/>
            <person name="Tamakoshi A."/>
            <person name="Tanaka T."/>
            <person name="Terpstra P."/>
            <person name="Tognoni A."/>
            <person name="Tosato V."/>
            <person name="Uchiyama S."/>
            <person name="Vandenbol M."/>
            <person name="Vannier F."/>
            <person name="Vassarotti A."/>
            <person name="Viari A."/>
            <person name="Wambutt R."/>
            <person name="Wedler E."/>
            <person name="Wedler H."/>
            <person name="Weitzenegger T."/>
            <person name="Winters P."/>
            <person name="Wipat A."/>
            <person name="Yamamoto H."/>
            <person name="Yamane K."/>
            <person name="Yasumoto K."/>
            <person name="Yata K."/>
            <person name="Yoshida K."/>
            <person name="Yoshikawa H.-F."/>
            <person name="Zumstein E."/>
            <person name="Yoshikawa H."/>
            <person name="Danchin A."/>
        </authorList>
    </citation>
    <scope>NUCLEOTIDE SEQUENCE [LARGE SCALE GENOMIC DNA]</scope>
    <source>
        <strain>168</strain>
    </source>
</reference>
<reference key="3">
    <citation type="journal article" date="2001" name="J. Bacteriol.">
        <title>Regulation of the glv operon in Bacillus subtilis: YfiA (GlvR) is a positive regulator of the operon that is repressed through CcpA and cre.</title>
        <authorList>
            <person name="Yamamoto H."/>
            <person name="Serizawa M."/>
            <person name="Thompson J."/>
            <person name="Sekiguchi J."/>
        </authorList>
    </citation>
    <scope>INDUCTION</scope>
</reference>
<reference key="4">
    <citation type="journal article" date="2006" name="J. Bacteriol.">
        <title>Maltose and maltodextrin utilization by Bacillus subtilis.</title>
        <authorList>
            <person name="Schoenert S."/>
            <person name="Seitz S."/>
            <person name="Krafft H."/>
            <person name="Feuerbaum E.-A."/>
            <person name="Andernach I."/>
            <person name="Witz G."/>
            <person name="Dahl M.K."/>
        </authorList>
    </citation>
    <scope>FUNCTION IN MALTOSE UPTAKE</scope>
    <scope>CATALYTIC ACTIVITY</scope>
    <scope>BIOPHYSICOCHEMICAL PROPERTIES</scope>
    <scope>DISRUPTION PHENOTYPE</scope>
    <source>
        <strain>168</strain>
    </source>
</reference>
<keyword id="KW-1003">Cell membrane</keyword>
<keyword id="KW-0418">Kinase</keyword>
<keyword id="KW-0472">Membrane</keyword>
<keyword id="KW-0598">Phosphotransferase system</keyword>
<keyword id="KW-1185">Reference proteome</keyword>
<keyword id="KW-0762">Sugar transport</keyword>
<keyword id="KW-0808">Transferase</keyword>
<keyword id="KW-0812">Transmembrane</keyword>
<keyword id="KW-1133">Transmembrane helix</keyword>
<keyword id="KW-0813">Transport</keyword>
<dbReference type="EC" id="2.7.1.208" evidence="4"/>
<dbReference type="EMBL" id="D50543">
    <property type="protein sequence ID" value="BAA09105.1"/>
    <property type="molecule type" value="Genomic_DNA"/>
</dbReference>
<dbReference type="EMBL" id="AL009126">
    <property type="protein sequence ID" value="CAB12649.1"/>
    <property type="molecule type" value="Genomic_DNA"/>
</dbReference>
<dbReference type="PIR" id="G69635">
    <property type="entry name" value="G69635"/>
</dbReference>
<dbReference type="RefSeq" id="NP_388701.1">
    <property type="nucleotide sequence ID" value="NC_000964.3"/>
</dbReference>
<dbReference type="RefSeq" id="WP_003233606.1">
    <property type="nucleotide sequence ID" value="NZ_OZ025638.1"/>
</dbReference>
<dbReference type="SMR" id="P54715"/>
<dbReference type="FunCoup" id="P54715">
    <property type="interactions" value="100"/>
</dbReference>
<dbReference type="STRING" id="224308.BSU08200"/>
<dbReference type="TCDB" id="4.A.1.1.8">
    <property type="family name" value="the pts glucose-glucoside (glc) family"/>
</dbReference>
<dbReference type="PaxDb" id="224308-BSU08200"/>
<dbReference type="EnsemblBacteria" id="CAB12649">
    <property type="protein sequence ID" value="CAB12649"/>
    <property type="gene ID" value="BSU_08200"/>
</dbReference>
<dbReference type="GeneID" id="939713"/>
<dbReference type="KEGG" id="bsu:BSU08200"/>
<dbReference type="PATRIC" id="fig|224308.179.peg.886"/>
<dbReference type="eggNOG" id="COG1263">
    <property type="taxonomic scope" value="Bacteria"/>
</dbReference>
<dbReference type="eggNOG" id="COG1264">
    <property type="taxonomic scope" value="Bacteria"/>
</dbReference>
<dbReference type="InParanoid" id="P54715"/>
<dbReference type="OrthoDB" id="9764327at2"/>
<dbReference type="PhylomeDB" id="P54715"/>
<dbReference type="BioCyc" id="BSUB:BSU08200-MONOMER"/>
<dbReference type="SABIO-RK" id="P54715"/>
<dbReference type="Proteomes" id="UP000001570">
    <property type="component" value="Chromosome"/>
</dbReference>
<dbReference type="GO" id="GO:0005886">
    <property type="term" value="C:plasma membrane"/>
    <property type="evidence" value="ECO:0000318"/>
    <property type="project" value="GO_Central"/>
</dbReference>
<dbReference type="GO" id="GO:0016301">
    <property type="term" value="F:kinase activity"/>
    <property type="evidence" value="ECO:0007669"/>
    <property type="project" value="UniProtKB-KW"/>
</dbReference>
<dbReference type="GO" id="GO:0008982">
    <property type="term" value="F:protein-N(PI)-phosphohistidine-sugar phosphotransferase activity"/>
    <property type="evidence" value="ECO:0007669"/>
    <property type="project" value="InterPro"/>
</dbReference>
<dbReference type="GO" id="GO:0090563">
    <property type="term" value="F:protein-phosphocysteine-sugar phosphotransferase activity"/>
    <property type="evidence" value="ECO:0000318"/>
    <property type="project" value="GO_Central"/>
</dbReference>
<dbReference type="GO" id="GO:0009401">
    <property type="term" value="P:phosphoenolpyruvate-dependent sugar phosphotransferase system"/>
    <property type="evidence" value="ECO:0000318"/>
    <property type="project" value="GO_Central"/>
</dbReference>
<dbReference type="CDD" id="cd00212">
    <property type="entry name" value="PTS_IIB_glc"/>
    <property type="match status" value="1"/>
</dbReference>
<dbReference type="Gene3D" id="3.30.1360.60">
    <property type="entry name" value="Glucose permease domain IIB"/>
    <property type="match status" value="1"/>
</dbReference>
<dbReference type="InterPro" id="IPR036878">
    <property type="entry name" value="Glu_permease_IIB"/>
</dbReference>
<dbReference type="InterPro" id="IPR018113">
    <property type="entry name" value="PTrfase_EIIB_Cys"/>
</dbReference>
<dbReference type="InterPro" id="IPR003352">
    <property type="entry name" value="PTS_EIIC"/>
</dbReference>
<dbReference type="InterPro" id="IPR013013">
    <property type="entry name" value="PTS_EIIC_1"/>
</dbReference>
<dbReference type="InterPro" id="IPR050429">
    <property type="entry name" value="PTS_Glucose_EIICBA"/>
</dbReference>
<dbReference type="InterPro" id="IPR001996">
    <property type="entry name" value="PTS_IIB_1"/>
</dbReference>
<dbReference type="InterPro" id="IPR010975">
    <property type="entry name" value="PTS_IIBC_a_glc"/>
</dbReference>
<dbReference type="InterPro" id="IPR004719">
    <property type="entry name" value="PTS_maltose/Glc_sub_IIC"/>
</dbReference>
<dbReference type="NCBIfam" id="TIGR00826">
    <property type="entry name" value="EIIB_glc"/>
    <property type="match status" value="1"/>
</dbReference>
<dbReference type="NCBIfam" id="TIGR00852">
    <property type="entry name" value="pts-Glc"/>
    <property type="match status" value="1"/>
</dbReference>
<dbReference type="NCBIfam" id="TIGR02005">
    <property type="entry name" value="PTS-IIBC-alpha"/>
    <property type="match status" value="1"/>
</dbReference>
<dbReference type="PANTHER" id="PTHR30009">
    <property type="entry name" value="CYTOCHROME C-TYPE SYNTHESIS PROTEIN AND PTS TRANSMEMBRANE COMPONENT"/>
    <property type="match status" value="1"/>
</dbReference>
<dbReference type="PANTHER" id="PTHR30009:SF12">
    <property type="entry name" value="PHOSPHOTRANSFERASE IIC COMPONENT GLVC"/>
    <property type="match status" value="1"/>
</dbReference>
<dbReference type="Pfam" id="PF00367">
    <property type="entry name" value="PTS_EIIB"/>
    <property type="match status" value="1"/>
</dbReference>
<dbReference type="Pfam" id="PF02378">
    <property type="entry name" value="PTS_EIIC"/>
    <property type="match status" value="1"/>
</dbReference>
<dbReference type="SUPFAM" id="SSF55604">
    <property type="entry name" value="Glucose permease domain IIB"/>
    <property type="match status" value="1"/>
</dbReference>
<dbReference type="PROSITE" id="PS51098">
    <property type="entry name" value="PTS_EIIB_TYPE_1"/>
    <property type="match status" value="1"/>
</dbReference>
<dbReference type="PROSITE" id="PS01035">
    <property type="entry name" value="PTS_EIIB_TYPE_1_CYS"/>
    <property type="match status" value="1"/>
</dbReference>
<dbReference type="PROSITE" id="PS51103">
    <property type="entry name" value="PTS_EIIC_TYPE_1"/>
    <property type="match status" value="1"/>
</dbReference>
<comment type="function">
    <text evidence="4">The phosphoenolpyruvate-dependent sugar phosphotransferase system (sugar PTS), a major carbohydrate active transport system, catalyzes the phosphorylation of incoming sugar substrates concomitantly with their translocation across the cell membrane. This system is involved in maltose transport.</text>
</comment>
<comment type="catalytic activity">
    <reaction evidence="4">
        <text>D-maltose(out) + N(pros)-phospho-L-histidyl-[protein] = alpha-maltose 6'-phosphate(in) + L-histidyl-[protein]</text>
        <dbReference type="Rhea" id="RHEA:49300"/>
        <dbReference type="Rhea" id="RHEA-COMP:9745"/>
        <dbReference type="Rhea" id="RHEA-COMP:9746"/>
        <dbReference type="ChEBI" id="CHEBI:17306"/>
        <dbReference type="ChEBI" id="CHEBI:29979"/>
        <dbReference type="ChEBI" id="CHEBI:57478"/>
        <dbReference type="ChEBI" id="CHEBI:64837"/>
        <dbReference type="EC" id="2.7.1.208"/>
    </reaction>
</comment>
<comment type="biophysicochemical properties">
    <kinetics>
        <KM evidence="4">5 uM for maltose</KM>
    </kinetics>
</comment>
<comment type="subcellular location">
    <subcellularLocation>
        <location evidence="2">Cell membrane</location>
        <topology evidence="2">Multi-pass membrane protein</topology>
    </subcellularLocation>
</comment>
<comment type="induction">
    <text evidence="3">By maltose; repressed by glucose.</text>
</comment>
<comment type="domain">
    <text evidence="2">The EIIC domain type-1 forms the PTS system translocation channel and contains the specific substrate-binding site.</text>
</comment>
<comment type="domain">
    <text evidence="1">The PTS EIIB type-1 domain is phosphorylated by phospho-EIIA on a cysteinyl residue. Then, it transfers the phosphoryl group to the sugar substrate concomitantly with the sugar uptake processed by the PTS EIIC type-1 domain.</text>
</comment>
<comment type="disruption phenotype">
    <text evidence="4">Cells lacking this gene show no maltose uptake.</text>
</comment>
<comment type="miscellaneous">
    <text evidence="7">Maltose uptake in B.subtilis occurs only via the malP-encoded specific PTS-dependent EIICB(Mal) and not via another transport mechanism.</text>
</comment>
<organism>
    <name type="scientific">Bacillus subtilis (strain 168)</name>
    <dbReference type="NCBI Taxonomy" id="224308"/>
    <lineage>
        <taxon>Bacteria</taxon>
        <taxon>Bacillati</taxon>
        <taxon>Bacillota</taxon>
        <taxon>Bacilli</taxon>
        <taxon>Bacillales</taxon>
        <taxon>Bacillaceae</taxon>
        <taxon>Bacillus</taxon>
    </lineage>
</organism>
<feature type="chain" id="PRO_0000186582" description="PTS system maltose-specific EIICB component">
    <location>
        <begin position="1"/>
        <end position="527"/>
    </location>
</feature>
<feature type="transmembrane region" description="Helical" evidence="2">
    <location>
        <begin position="8"/>
        <end position="28"/>
    </location>
</feature>
<feature type="transmembrane region" description="Helical" evidence="2">
    <location>
        <begin position="59"/>
        <end position="79"/>
    </location>
</feature>
<feature type="transmembrane region" description="Helical" evidence="2">
    <location>
        <begin position="93"/>
        <end position="113"/>
    </location>
</feature>
<feature type="transmembrane region" description="Helical" evidence="2">
    <location>
        <begin position="132"/>
        <end position="152"/>
    </location>
</feature>
<feature type="transmembrane region" description="Helical" evidence="2">
    <location>
        <begin position="173"/>
        <end position="193"/>
    </location>
</feature>
<feature type="transmembrane region" description="Helical" evidence="2">
    <location>
        <begin position="200"/>
        <end position="220"/>
    </location>
</feature>
<feature type="transmembrane region" description="Helical" evidence="2">
    <location>
        <begin position="224"/>
        <end position="244"/>
    </location>
</feature>
<feature type="transmembrane region" description="Helical" evidence="2">
    <location>
        <begin position="276"/>
        <end position="296"/>
    </location>
</feature>
<feature type="transmembrane region" description="Helical" evidence="2">
    <location>
        <begin position="305"/>
        <end position="325"/>
    </location>
</feature>
<feature type="transmembrane region" description="Helical" evidence="2">
    <location>
        <begin position="326"/>
        <end position="346"/>
    </location>
</feature>
<feature type="transmembrane region" description="Helical" evidence="2">
    <location>
        <begin position="357"/>
        <end position="377"/>
    </location>
</feature>
<feature type="transmembrane region" description="Helical" evidence="2">
    <location>
        <begin position="382"/>
        <end position="402"/>
    </location>
</feature>
<feature type="domain" description="PTS EIIC type-1" evidence="2">
    <location>
        <begin position="1"/>
        <end position="418"/>
    </location>
</feature>
<feature type="domain" description="PTS EIIB type-1" evidence="1">
    <location>
        <begin position="449"/>
        <end position="527"/>
    </location>
</feature>
<feature type="active site" description="Phosphocysteine intermediate; for EIIB activity" evidence="1">
    <location>
        <position position="471"/>
    </location>
</feature>
<gene>
    <name evidence="5" type="primary">malP</name>
    <name type="synonym">glv-2</name>
    <name evidence="6" type="synonym">glvC</name>
    <name type="synonym">glvCB</name>
    <name type="synonym">yfiB</name>
    <name type="ordered locus">BSU08200</name>
</gene>
<evidence type="ECO:0000255" key="1">
    <source>
        <dbReference type="PROSITE-ProRule" id="PRU00421"/>
    </source>
</evidence>
<evidence type="ECO:0000255" key="2">
    <source>
        <dbReference type="PROSITE-ProRule" id="PRU00426"/>
    </source>
</evidence>
<evidence type="ECO:0000269" key="3">
    <source>
    </source>
</evidence>
<evidence type="ECO:0000269" key="4">
    <source>
    </source>
</evidence>
<evidence type="ECO:0000303" key="5">
    <source>
    </source>
</evidence>
<evidence type="ECO:0000303" key="6">
    <source>
    </source>
</evidence>
<evidence type="ECO:0000305" key="7">
    <source>
    </source>
</evidence>
<accession>P54715</accession>
<sequence length="527" mass="58055">MMQKIQRFGSAMFVPVLLFAFAGIIVGISTLFKNKTLMGPLADPDGFWYQCWYIIEQGGWTVFNQMPLLFAIGIPVALAKKAQARACLEALTVYLTFNYFVSAILTVWGGAFGVDMNQEVGGTSGLTMIAGIKTLDTNIIGAIFISSIVVFLHNRYFDKKLPDFLGIFQGSTYIVMISFFIMIPIALAVSYIWPMVQSGIGSLQSFLVASGAVGVWIYTFLERILIPTGLHHFIYTPFIYGPAVAEGGIVTYWAQHLGEYSQSAKPLKELFPQGGFALHGNSKIFGIPGIALAFYVTAKKEKKKLVAGLLIPVTLTAIVAGITEPIEFTFLFISPFLFAVHAVLAATMSTVMYMAGVVGNMGGGLIEAVTLNWIPLFGSHGMTYVYQILIGLSFTAIYFFVFRFLILKFNIATPGREKDEQQETKLYSKKEYRERKNKDETASAAETADDTAFLYIEALGGKDNITEVTNCATRLRVSVKDETKVEPDSVFRALGAHGVVRNGKAFQVIIGLSVPQMRERVEKILNQ</sequence>
<name>PTOCB_BACSU</name>
<proteinExistence type="evidence at protein level"/>
<protein>
    <recommendedName>
        <fullName evidence="5">PTS system maltose-specific EIICB component</fullName>
    </recommendedName>
    <domain>
        <recommendedName>
            <fullName evidence="5">Maltose permease IIC component</fullName>
        </recommendedName>
        <alternativeName>
            <fullName evidence="5">PTS system maltose-specific EIIC component</fullName>
        </alternativeName>
    </domain>
    <domain>
        <recommendedName>
            <fullName evidence="5">Maltose-specific phosphotransferase enzyme IIB component</fullName>
            <ecNumber evidence="4">2.7.1.208</ecNumber>
        </recommendedName>
        <alternativeName>
            <fullName evidence="5">PTS system maltose-specific EIIB component</fullName>
        </alternativeName>
    </domain>
</protein>